<comment type="similarity">
    <text evidence="1">Belongs to the bacterial ribosomal protein bS16 family.</text>
</comment>
<keyword id="KW-1185">Reference proteome</keyword>
<keyword id="KW-0687">Ribonucleoprotein</keyword>
<keyword id="KW-0689">Ribosomal protein</keyword>
<feature type="chain" id="PRO_1000049237" description="Small ribosomal subunit protein bS16">
    <location>
        <begin position="1"/>
        <end position="135"/>
    </location>
</feature>
<feature type="region of interest" description="Disordered" evidence="2">
    <location>
        <begin position="106"/>
        <end position="135"/>
    </location>
</feature>
<feature type="compositionally biased region" description="Basic residues" evidence="2">
    <location>
        <begin position="109"/>
        <end position="122"/>
    </location>
</feature>
<gene>
    <name evidence="1" type="primary">rpsP</name>
    <name type="ordered locus">Cpha266_1524</name>
</gene>
<dbReference type="EMBL" id="CP000492">
    <property type="protein sequence ID" value="ABL65546.1"/>
    <property type="molecule type" value="Genomic_DNA"/>
</dbReference>
<dbReference type="RefSeq" id="WP_011745358.1">
    <property type="nucleotide sequence ID" value="NC_008639.1"/>
</dbReference>
<dbReference type="SMR" id="A1BGL9"/>
<dbReference type="STRING" id="290317.Cpha266_1524"/>
<dbReference type="KEGG" id="cph:Cpha266_1524"/>
<dbReference type="eggNOG" id="COG0228">
    <property type="taxonomic scope" value="Bacteria"/>
</dbReference>
<dbReference type="HOGENOM" id="CLU_100590_3_2_10"/>
<dbReference type="OrthoDB" id="9807878at2"/>
<dbReference type="Proteomes" id="UP000008701">
    <property type="component" value="Chromosome"/>
</dbReference>
<dbReference type="GO" id="GO:0005737">
    <property type="term" value="C:cytoplasm"/>
    <property type="evidence" value="ECO:0007669"/>
    <property type="project" value="UniProtKB-ARBA"/>
</dbReference>
<dbReference type="GO" id="GO:0015935">
    <property type="term" value="C:small ribosomal subunit"/>
    <property type="evidence" value="ECO:0007669"/>
    <property type="project" value="TreeGrafter"/>
</dbReference>
<dbReference type="GO" id="GO:0003735">
    <property type="term" value="F:structural constituent of ribosome"/>
    <property type="evidence" value="ECO:0007669"/>
    <property type="project" value="InterPro"/>
</dbReference>
<dbReference type="GO" id="GO:0006412">
    <property type="term" value="P:translation"/>
    <property type="evidence" value="ECO:0007669"/>
    <property type="project" value="UniProtKB-UniRule"/>
</dbReference>
<dbReference type="Gene3D" id="3.30.1320.10">
    <property type="match status" value="1"/>
</dbReference>
<dbReference type="HAMAP" id="MF_00385">
    <property type="entry name" value="Ribosomal_bS16"/>
    <property type="match status" value="1"/>
</dbReference>
<dbReference type="InterPro" id="IPR000307">
    <property type="entry name" value="Ribosomal_bS16"/>
</dbReference>
<dbReference type="InterPro" id="IPR020592">
    <property type="entry name" value="Ribosomal_bS16_CS"/>
</dbReference>
<dbReference type="InterPro" id="IPR023803">
    <property type="entry name" value="Ribosomal_bS16_dom_sf"/>
</dbReference>
<dbReference type="NCBIfam" id="TIGR00002">
    <property type="entry name" value="S16"/>
    <property type="match status" value="1"/>
</dbReference>
<dbReference type="PANTHER" id="PTHR12919">
    <property type="entry name" value="30S RIBOSOMAL PROTEIN S16"/>
    <property type="match status" value="1"/>
</dbReference>
<dbReference type="PANTHER" id="PTHR12919:SF20">
    <property type="entry name" value="SMALL RIBOSOMAL SUBUNIT PROTEIN BS16M"/>
    <property type="match status" value="1"/>
</dbReference>
<dbReference type="Pfam" id="PF00886">
    <property type="entry name" value="Ribosomal_S16"/>
    <property type="match status" value="1"/>
</dbReference>
<dbReference type="SUPFAM" id="SSF54565">
    <property type="entry name" value="Ribosomal protein S16"/>
    <property type="match status" value="1"/>
</dbReference>
<dbReference type="PROSITE" id="PS00732">
    <property type="entry name" value="RIBOSOMAL_S16"/>
    <property type="match status" value="1"/>
</dbReference>
<evidence type="ECO:0000255" key="1">
    <source>
        <dbReference type="HAMAP-Rule" id="MF_00385"/>
    </source>
</evidence>
<evidence type="ECO:0000256" key="2">
    <source>
        <dbReference type="SAM" id="MobiDB-lite"/>
    </source>
</evidence>
<evidence type="ECO:0000305" key="3"/>
<proteinExistence type="inferred from homology"/>
<name>RS16_CHLPD</name>
<protein>
    <recommendedName>
        <fullName evidence="1">Small ribosomal subunit protein bS16</fullName>
    </recommendedName>
    <alternativeName>
        <fullName evidence="3">30S ribosomal protein S16</fullName>
    </alternativeName>
</protein>
<organism>
    <name type="scientific">Chlorobium phaeobacteroides (strain DSM 266 / SMG 266 / 2430)</name>
    <dbReference type="NCBI Taxonomy" id="290317"/>
    <lineage>
        <taxon>Bacteria</taxon>
        <taxon>Pseudomonadati</taxon>
        <taxon>Chlorobiota</taxon>
        <taxon>Chlorobiia</taxon>
        <taxon>Chlorobiales</taxon>
        <taxon>Chlorobiaceae</taxon>
        <taxon>Chlorobium/Pelodictyon group</taxon>
        <taxon>Chlorobium</taxon>
    </lineage>
</organism>
<sequence length="135" mass="15590">MVKIRLKRTGRKKLPIYQIVAADARSPRDGKFLEVIGHYQPTAKPHAVTIKKDRVAYWMQTGAQPTDTVRSLIRSTGLLYEMRLKKMGRSEEEIVSEMEKWQARQTERRQKRLVVKSRRRQAKKEAEGKAAGAEA</sequence>
<accession>A1BGL9</accession>
<reference key="1">
    <citation type="submission" date="2006-12" db="EMBL/GenBank/DDBJ databases">
        <title>Complete sequence of Chlorobium phaeobacteroides DSM 266.</title>
        <authorList>
            <consortium name="US DOE Joint Genome Institute"/>
            <person name="Copeland A."/>
            <person name="Lucas S."/>
            <person name="Lapidus A."/>
            <person name="Barry K."/>
            <person name="Detter J.C."/>
            <person name="Glavina del Rio T."/>
            <person name="Hammon N."/>
            <person name="Israni S."/>
            <person name="Pitluck S."/>
            <person name="Goltsman E."/>
            <person name="Schmutz J."/>
            <person name="Larimer F."/>
            <person name="Land M."/>
            <person name="Hauser L."/>
            <person name="Mikhailova N."/>
            <person name="Li T."/>
            <person name="Overmann J."/>
            <person name="Bryant D.A."/>
            <person name="Richardson P."/>
        </authorList>
    </citation>
    <scope>NUCLEOTIDE SEQUENCE [LARGE SCALE GENOMIC DNA]</scope>
    <source>
        <strain>DSM 266 / SMG 266 / 2430</strain>
    </source>
</reference>